<proteinExistence type="inferred from homology"/>
<accession>Q4WQM6</accession>
<comment type="function">
    <text evidence="1">Component of the spliceosomal U1 snRNP, which is essential for recognition of the pre-mRNA 5' splice-site and the subsequent assembly of the spliceosome. U1-C is directly involved in initial 5' splice-site recognition for both constitutive and regulated alternative splicing. The interaction with the 5' splice-site seems to precede base-pairing between the pre-mRNA and the U1 snRNA. Stimulates commitment or early (E) complex formation by stabilizing the base pairing of the 5' end of the U1 snRNA and the 5' splice-site region.</text>
</comment>
<comment type="subunit">
    <text evidence="1">U1 snRNP is composed of the 7 core Sm proteins B/B', D1, D2, D3, E, F and G that assemble in a heptameric protein ring on the Sm site of the small nuclear RNA to form the core snRNP, and at least 3 U1 snRNP-specific proteins U1-70K, U1-A and U1-C. U1-C interacts with U1 snRNA and the 5' splice-site region of the pre-mRNA.</text>
</comment>
<comment type="subcellular location">
    <subcellularLocation>
        <location evidence="1">Nucleus</location>
    </subcellularLocation>
</comment>
<comment type="similarity">
    <text evidence="1">Belongs to the U1 small nuclear ribonucleoprotein C family.</text>
</comment>
<comment type="sequence caution" evidence="3">
    <conflict type="erroneous gene model prediction">
        <sequence resource="EMBL-CDS" id="EAL89458"/>
    </conflict>
</comment>
<dbReference type="EMBL" id="AAHF01000005">
    <property type="protein sequence ID" value="EAL89458.2"/>
    <property type="status" value="ALT_SEQ"/>
    <property type="molecule type" value="Genomic_DNA"/>
</dbReference>
<dbReference type="RefSeq" id="XP_751496.2">
    <property type="nucleotide sequence ID" value="XM_746403.2"/>
</dbReference>
<dbReference type="SMR" id="Q4WQM6"/>
<dbReference type="STRING" id="330879.Q4WQM6"/>
<dbReference type="GeneID" id="3509516"/>
<dbReference type="KEGG" id="afm:AFUA_4G13350"/>
<dbReference type="eggNOG" id="KOG3454">
    <property type="taxonomic scope" value="Eukaryota"/>
</dbReference>
<dbReference type="HOGENOM" id="CLU_079697_2_0_1"/>
<dbReference type="InParanoid" id="Q4WQM6"/>
<dbReference type="OrthoDB" id="76567at2759"/>
<dbReference type="Proteomes" id="UP000002530">
    <property type="component" value="Chromosome 4"/>
</dbReference>
<dbReference type="GO" id="GO:0000243">
    <property type="term" value="C:commitment complex"/>
    <property type="evidence" value="ECO:0007669"/>
    <property type="project" value="UniProtKB-UniRule"/>
</dbReference>
<dbReference type="GO" id="GO:0005685">
    <property type="term" value="C:U1 snRNP"/>
    <property type="evidence" value="ECO:0000318"/>
    <property type="project" value="GO_Central"/>
</dbReference>
<dbReference type="GO" id="GO:0071004">
    <property type="term" value="C:U2-type prespliceosome"/>
    <property type="evidence" value="ECO:0007669"/>
    <property type="project" value="UniProtKB-UniRule"/>
</dbReference>
<dbReference type="GO" id="GO:0003729">
    <property type="term" value="F:mRNA binding"/>
    <property type="evidence" value="ECO:0007669"/>
    <property type="project" value="UniProtKB-UniRule"/>
</dbReference>
<dbReference type="GO" id="GO:0030627">
    <property type="term" value="F:pre-mRNA 5'-splice site binding"/>
    <property type="evidence" value="ECO:0000318"/>
    <property type="project" value="GO_Central"/>
</dbReference>
<dbReference type="GO" id="GO:0030619">
    <property type="term" value="F:U1 snRNA binding"/>
    <property type="evidence" value="ECO:0007669"/>
    <property type="project" value="UniProtKB-UniRule"/>
</dbReference>
<dbReference type="GO" id="GO:0008270">
    <property type="term" value="F:zinc ion binding"/>
    <property type="evidence" value="ECO:0007669"/>
    <property type="project" value="UniProtKB-UniRule"/>
</dbReference>
<dbReference type="GO" id="GO:0000395">
    <property type="term" value="P:mRNA 5'-splice site recognition"/>
    <property type="evidence" value="ECO:0000318"/>
    <property type="project" value="GO_Central"/>
</dbReference>
<dbReference type="GO" id="GO:0000387">
    <property type="term" value="P:spliceosomal snRNP assembly"/>
    <property type="evidence" value="ECO:0007669"/>
    <property type="project" value="UniProtKB-UniRule"/>
</dbReference>
<dbReference type="FunFam" id="3.30.160.60:FF:000059">
    <property type="entry name" value="U1 small nuclear ribonucleoprotein C"/>
    <property type="match status" value="1"/>
</dbReference>
<dbReference type="Gene3D" id="3.30.160.60">
    <property type="entry name" value="Classic Zinc Finger"/>
    <property type="match status" value="1"/>
</dbReference>
<dbReference type="HAMAP" id="MF_03153">
    <property type="entry name" value="U1_C"/>
    <property type="match status" value="1"/>
</dbReference>
<dbReference type="InterPro" id="IPR000690">
    <property type="entry name" value="Matrin/U1-C_Znf_C2H2"/>
</dbReference>
<dbReference type="InterPro" id="IPR003604">
    <property type="entry name" value="Matrin/U1-like-C_Znf_C2H2"/>
</dbReference>
<dbReference type="InterPro" id="IPR013085">
    <property type="entry name" value="U1-CZ_Znf_C2H2"/>
</dbReference>
<dbReference type="InterPro" id="IPR017340">
    <property type="entry name" value="U1_snRNP-C"/>
</dbReference>
<dbReference type="InterPro" id="IPR036236">
    <property type="entry name" value="Znf_C2H2_sf"/>
</dbReference>
<dbReference type="PANTHER" id="PTHR31148">
    <property type="entry name" value="U1 SMALL NUCLEAR RIBONUCLEOPROTEIN C"/>
    <property type="match status" value="1"/>
</dbReference>
<dbReference type="PANTHER" id="PTHR31148:SF1">
    <property type="entry name" value="U1 SMALL NUCLEAR RIBONUCLEOPROTEIN C"/>
    <property type="match status" value="1"/>
</dbReference>
<dbReference type="Pfam" id="PF06220">
    <property type="entry name" value="zf-U1"/>
    <property type="match status" value="1"/>
</dbReference>
<dbReference type="PRINTS" id="PR01217">
    <property type="entry name" value="PRICHEXTENSN"/>
</dbReference>
<dbReference type="SMART" id="SM00451">
    <property type="entry name" value="ZnF_U1"/>
    <property type="match status" value="1"/>
</dbReference>
<dbReference type="SUPFAM" id="SSF57667">
    <property type="entry name" value="beta-beta-alpha zinc fingers"/>
    <property type="match status" value="1"/>
</dbReference>
<dbReference type="PROSITE" id="PS50171">
    <property type="entry name" value="ZF_MATRIN"/>
    <property type="match status" value="1"/>
</dbReference>
<keyword id="KW-0479">Metal-binding</keyword>
<keyword id="KW-0539">Nucleus</keyword>
<keyword id="KW-1185">Reference proteome</keyword>
<keyword id="KW-0687">Ribonucleoprotein</keyword>
<keyword id="KW-0694">RNA-binding</keyword>
<keyword id="KW-0862">Zinc</keyword>
<keyword id="KW-0863">Zinc-finger</keyword>
<name>RU1C_ASPFU</name>
<reference key="1">
    <citation type="journal article" date="2005" name="Nature">
        <title>Genomic sequence of the pathogenic and allergenic filamentous fungus Aspergillus fumigatus.</title>
        <authorList>
            <person name="Nierman W.C."/>
            <person name="Pain A."/>
            <person name="Anderson M.J."/>
            <person name="Wortman J.R."/>
            <person name="Kim H.S."/>
            <person name="Arroyo J."/>
            <person name="Berriman M."/>
            <person name="Abe K."/>
            <person name="Archer D.B."/>
            <person name="Bermejo C."/>
            <person name="Bennett J.W."/>
            <person name="Bowyer P."/>
            <person name="Chen D."/>
            <person name="Collins M."/>
            <person name="Coulsen R."/>
            <person name="Davies R."/>
            <person name="Dyer P.S."/>
            <person name="Farman M.L."/>
            <person name="Fedorova N."/>
            <person name="Fedorova N.D."/>
            <person name="Feldblyum T.V."/>
            <person name="Fischer R."/>
            <person name="Fosker N."/>
            <person name="Fraser A."/>
            <person name="Garcia J.L."/>
            <person name="Garcia M.J."/>
            <person name="Goble A."/>
            <person name="Goldman G.H."/>
            <person name="Gomi K."/>
            <person name="Griffith-Jones S."/>
            <person name="Gwilliam R."/>
            <person name="Haas B.J."/>
            <person name="Haas H."/>
            <person name="Harris D.E."/>
            <person name="Horiuchi H."/>
            <person name="Huang J."/>
            <person name="Humphray S."/>
            <person name="Jimenez J."/>
            <person name="Keller N."/>
            <person name="Khouri H."/>
            <person name="Kitamoto K."/>
            <person name="Kobayashi T."/>
            <person name="Konzack S."/>
            <person name="Kulkarni R."/>
            <person name="Kumagai T."/>
            <person name="Lafton A."/>
            <person name="Latge J.-P."/>
            <person name="Li W."/>
            <person name="Lord A."/>
            <person name="Lu C."/>
            <person name="Majoros W.H."/>
            <person name="May G.S."/>
            <person name="Miller B.L."/>
            <person name="Mohamoud Y."/>
            <person name="Molina M."/>
            <person name="Monod M."/>
            <person name="Mouyna I."/>
            <person name="Mulligan S."/>
            <person name="Murphy L.D."/>
            <person name="O'Neil S."/>
            <person name="Paulsen I."/>
            <person name="Penalva M.A."/>
            <person name="Pertea M."/>
            <person name="Price C."/>
            <person name="Pritchard B.L."/>
            <person name="Quail M.A."/>
            <person name="Rabbinowitsch E."/>
            <person name="Rawlins N."/>
            <person name="Rajandream M.A."/>
            <person name="Reichard U."/>
            <person name="Renauld H."/>
            <person name="Robson G.D."/>
            <person name="Rodriguez de Cordoba S."/>
            <person name="Rodriguez-Pena J.M."/>
            <person name="Ronning C.M."/>
            <person name="Rutter S."/>
            <person name="Salzberg S.L."/>
            <person name="Sanchez M."/>
            <person name="Sanchez-Ferrero J.C."/>
            <person name="Saunders D."/>
            <person name="Seeger K."/>
            <person name="Squares R."/>
            <person name="Squares S."/>
            <person name="Takeuchi M."/>
            <person name="Tekaia F."/>
            <person name="Turner G."/>
            <person name="Vazquez de Aldana C.R."/>
            <person name="Weidman J."/>
            <person name="White O."/>
            <person name="Woodward J.R."/>
            <person name="Yu J.-H."/>
            <person name="Fraser C.M."/>
            <person name="Galagan J.E."/>
            <person name="Asai K."/>
            <person name="Machida M."/>
            <person name="Hall N."/>
            <person name="Barrell B.G."/>
            <person name="Denning D.W."/>
        </authorList>
    </citation>
    <scope>NUCLEOTIDE SEQUENCE [LARGE SCALE GENOMIC DNA]</scope>
    <source>
        <strain>ATCC MYA-4609 / CBS 101355 / FGSC A1100 / Af293</strain>
    </source>
</reference>
<protein>
    <recommendedName>
        <fullName evidence="1">U1 small nuclear ribonucleoprotein C</fullName>
        <shortName evidence="1">U1 snRNP C</shortName>
        <shortName evidence="1">U1-C</shortName>
        <shortName evidence="1">U1C</shortName>
    </recommendedName>
</protein>
<evidence type="ECO:0000255" key="1">
    <source>
        <dbReference type="HAMAP-Rule" id="MF_03153"/>
    </source>
</evidence>
<evidence type="ECO:0000256" key="2">
    <source>
        <dbReference type="SAM" id="MobiDB-lite"/>
    </source>
</evidence>
<evidence type="ECO:0000305" key="3"/>
<gene>
    <name type="ORF">AFUA_4G13350</name>
</gene>
<feature type="chain" id="PRO_0000414290" description="U1 small nuclear ribonucleoprotein C">
    <location>
        <begin position="1"/>
        <end position="216"/>
    </location>
</feature>
<feature type="zinc finger region" description="Matrin-type" evidence="1">
    <location>
        <begin position="4"/>
        <end position="36"/>
    </location>
</feature>
<feature type="region of interest" description="Disordered" evidence="2">
    <location>
        <begin position="68"/>
        <end position="216"/>
    </location>
</feature>
<feature type="compositionally biased region" description="Pro residues" evidence="2">
    <location>
        <begin position="68"/>
        <end position="80"/>
    </location>
</feature>
<feature type="compositionally biased region" description="Pro residues" evidence="2">
    <location>
        <begin position="87"/>
        <end position="198"/>
    </location>
</feature>
<feature type="compositionally biased region" description="Pro residues" evidence="2">
    <location>
        <begin position="206"/>
        <end position="216"/>
    </location>
</feature>
<organism>
    <name type="scientific">Aspergillus fumigatus (strain ATCC MYA-4609 / CBS 101355 / FGSC A1100 / Af293)</name>
    <name type="common">Neosartorya fumigata</name>
    <dbReference type="NCBI Taxonomy" id="330879"/>
    <lineage>
        <taxon>Eukaryota</taxon>
        <taxon>Fungi</taxon>
        <taxon>Dikarya</taxon>
        <taxon>Ascomycota</taxon>
        <taxon>Pezizomycotina</taxon>
        <taxon>Eurotiomycetes</taxon>
        <taxon>Eurotiomycetidae</taxon>
        <taxon>Eurotiales</taxon>
        <taxon>Aspergillaceae</taxon>
        <taxon>Aspergillus</taxon>
        <taxon>Aspergillus subgen. Fumigati</taxon>
    </lineage>
</organism>
<sequence>MPKFFCDYCDVYLTHDSMSVRKAHNAGRNHLRNVVEYYQQIGQEKAQSVIDSITSSYAAEGQAVPNPAMAPPGAFPPPFGFPGRPGQLPPPPFGIPPPGGPNGAPPGMPIPPPGGRGLPFPPPFPPAPGGAPGGLPPPPLGNMPPGQGFPPVPPPGGFPPNFQIPPPGAGGFPPVPPPGQPGFSPSPGPGMSGPPAPPGTGSSSLPGPPPGLSEKR</sequence>